<comment type="function">
    <text evidence="1">Catalyzes the N-acylation of UDP-3-O-acylglucosamine using 3-hydroxyacyl-ACP as the acyl donor. Is involved in the biosynthesis of lipid A, a phosphorylated glycolipid that anchors the lipopolysaccharide to the outer membrane of the cell.</text>
</comment>
<comment type="catalytic activity">
    <reaction evidence="1">
        <text>a UDP-3-O-[(3R)-3-hydroxyacyl]-alpha-D-glucosamine + a (3R)-hydroxyacyl-[ACP] = a UDP-2-N,3-O-bis[(3R)-3-hydroxyacyl]-alpha-D-glucosamine + holo-[ACP] + H(+)</text>
        <dbReference type="Rhea" id="RHEA:53836"/>
        <dbReference type="Rhea" id="RHEA-COMP:9685"/>
        <dbReference type="Rhea" id="RHEA-COMP:9945"/>
        <dbReference type="ChEBI" id="CHEBI:15378"/>
        <dbReference type="ChEBI" id="CHEBI:64479"/>
        <dbReference type="ChEBI" id="CHEBI:78827"/>
        <dbReference type="ChEBI" id="CHEBI:137740"/>
        <dbReference type="ChEBI" id="CHEBI:137748"/>
        <dbReference type="EC" id="2.3.1.191"/>
    </reaction>
</comment>
<comment type="pathway">
    <text evidence="1">Bacterial outer membrane biogenesis; LPS lipid A biosynthesis.</text>
</comment>
<comment type="subunit">
    <text evidence="1">Homotrimer.</text>
</comment>
<comment type="similarity">
    <text evidence="1">Belongs to the transferase hexapeptide repeat family. LpxD subfamily.</text>
</comment>
<accession>Q92Q47</accession>
<evidence type="ECO:0000255" key="1">
    <source>
        <dbReference type="HAMAP-Rule" id="MF_00523"/>
    </source>
</evidence>
<reference key="1">
    <citation type="journal article" date="2001" name="Proc. Natl. Acad. Sci. U.S.A.">
        <title>Analysis of the chromosome sequence of the legume symbiont Sinorhizobium meliloti strain 1021.</title>
        <authorList>
            <person name="Capela D."/>
            <person name="Barloy-Hubler F."/>
            <person name="Gouzy J."/>
            <person name="Bothe G."/>
            <person name="Ampe F."/>
            <person name="Batut J."/>
            <person name="Boistard P."/>
            <person name="Becker A."/>
            <person name="Boutry M."/>
            <person name="Cadieu E."/>
            <person name="Dreano S."/>
            <person name="Gloux S."/>
            <person name="Godrie T."/>
            <person name="Goffeau A."/>
            <person name="Kahn D."/>
            <person name="Kiss E."/>
            <person name="Lelaure V."/>
            <person name="Masuy D."/>
            <person name="Pohl T."/>
            <person name="Portetelle D."/>
            <person name="Puehler A."/>
            <person name="Purnelle B."/>
            <person name="Ramsperger U."/>
            <person name="Renard C."/>
            <person name="Thebault P."/>
            <person name="Vandenbol M."/>
            <person name="Weidner S."/>
            <person name="Galibert F."/>
        </authorList>
    </citation>
    <scope>NUCLEOTIDE SEQUENCE [LARGE SCALE GENOMIC DNA]</scope>
    <source>
        <strain>1021</strain>
    </source>
</reference>
<reference key="2">
    <citation type="journal article" date="2001" name="Science">
        <title>The composite genome of the legume symbiont Sinorhizobium meliloti.</title>
        <authorList>
            <person name="Galibert F."/>
            <person name="Finan T.M."/>
            <person name="Long S.R."/>
            <person name="Puehler A."/>
            <person name="Abola P."/>
            <person name="Ampe F."/>
            <person name="Barloy-Hubler F."/>
            <person name="Barnett M.J."/>
            <person name="Becker A."/>
            <person name="Boistard P."/>
            <person name="Bothe G."/>
            <person name="Boutry M."/>
            <person name="Bowser L."/>
            <person name="Buhrmester J."/>
            <person name="Cadieu E."/>
            <person name="Capela D."/>
            <person name="Chain P."/>
            <person name="Cowie A."/>
            <person name="Davis R.W."/>
            <person name="Dreano S."/>
            <person name="Federspiel N.A."/>
            <person name="Fisher R.F."/>
            <person name="Gloux S."/>
            <person name="Godrie T."/>
            <person name="Goffeau A."/>
            <person name="Golding B."/>
            <person name="Gouzy J."/>
            <person name="Gurjal M."/>
            <person name="Hernandez-Lucas I."/>
            <person name="Hong A."/>
            <person name="Huizar L."/>
            <person name="Hyman R.W."/>
            <person name="Jones T."/>
            <person name="Kahn D."/>
            <person name="Kahn M.L."/>
            <person name="Kalman S."/>
            <person name="Keating D.H."/>
            <person name="Kiss E."/>
            <person name="Komp C."/>
            <person name="Lelaure V."/>
            <person name="Masuy D."/>
            <person name="Palm C."/>
            <person name="Peck M.C."/>
            <person name="Pohl T.M."/>
            <person name="Portetelle D."/>
            <person name="Purnelle B."/>
            <person name="Ramsperger U."/>
            <person name="Surzycki R."/>
            <person name="Thebault P."/>
            <person name="Vandenbol M."/>
            <person name="Vorhoelter F.J."/>
            <person name="Weidner S."/>
            <person name="Wells D.H."/>
            <person name="Wong K."/>
            <person name="Yeh K.-C."/>
            <person name="Batut J."/>
        </authorList>
    </citation>
    <scope>NUCLEOTIDE SEQUENCE [LARGE SCALE GENOMIC DNA]</scope>
    <source>
        <strain>1021</strain>
    </source>
</reference>
<dbReference type="EC" id="2.3.1.191" evidence="1"/>
<dbReference type="EMBL" id="AL591688">
    <property type="protein sequence ID" value="CAC46082.1"/>
    <property type="molecule type" value="Genomic_DNA"/>
</dbReference>
<dbReference type="RefSeq" id="NP_385609.1">
    <property type="nucleotide sequence ID" value="NC_003047.1"/>
</dbReference>
<dbReference type="RefSeq" id="WP_010969259.1">
    <property type="nucleotide sequence ID" value="NC_003047.1"/>
</dbReference>
<dbReference type="SMR" id="Q92Q47"/>
<dbReference type="EnsemblBacteria" id="CAC46082">
    <property type="protein sequence ID" value="CAC46082"/>
    <property type="gene ID" value="SMc02093"/>
</dbReference>
<dbReference type="KEGG" id="sme:SMc02093"/>
<dbReference type="PATRIC" id="fig|266834.11.peg.2923"/>
<dbReference type="eggNOG" id="COG1044">
    <property type="taxonomic scope" value="Bacteria"/>
</dbReference>
<dbReference type="HOGENOM" id="CLU_049865_0_2_5"/>
<dbReference type="OrthoDB" id="9784739at2"/>
<dbReference type="UniPathway" id="UPA00973"/>
<dbReference type="Proteomes" id="UP000001976">
    <property type="component" value="Chromosome"/>
</dbReference>
<dbReference type="GO" id="GO:0016020">
    <property type="term" value="C:membrane"/>
    <property type="evidence" value="ECO:0007669"/>
    <property type="project" value="GOC"/>
</dbReference>
<dbReference type="GO" id="GO:0016410">
    <property type="term" value="F:N-acyltransferase activity"/>
    <property type="evidence" value="ECO:0007669"/>
    <property type="project" value="InterPro"/>
</dbReference>
<dbReference type="GO" id="GO:0009245">
    <property type="term" value="P:lipid A biosynthetic process"/>
    <property type="evidence" value="ECO:0007669"/>
    <property type="project" value="UniProtKB-UniRule"/>
</dbReference>
<dbReference type="CDD" id="cd03352">
    <property type="entry name" value="LbH_LpxD"/>
    <property type="match status" value="1"/>
</dbReference>
<dbReference type="Gene3D" id="2.160.10.10">
    <property type="entry name" value="Hexapeptide repeat proteins"/>
    <property type="match status" value="1"/>
</dbReference>
<dbReference type="Gene3D" id="3.40.1390.10">
    <property type="entry name" value="MurE/MurF, N-terminal domain"/>
    <property type="match status" value="1"/>
</dbReference>
<dbReference type="HAMAP" id="MF_00523">
    <property type="entry name" value="LpxD"/>
    <property type="match status" value="1"/>
</dbReference>
<dbReference type="InterPro" id="IPR001451">
    <property type="entry name" value="Hexapep"/>
</dbReference>
<dbReference type="InterPro" id="IPR018357">
    <property type="entry name" value="Hexapep_transf_CS"/>
</dbReference>
<dbReference type="InterPro" id="IPR007691">
    <property type="entry name" value="LpxD"/>
</dbReference>
<dbReference type="InterPro" id="IPR011004">
    <property type="entry name" value="Trimer_LpxA-like_sf"/>
</dbReference>
<dbReference type="InterPro" id="IPR020573">
    <property type="entry name" value="UDP_GlcNAc_AcTrfase_non-rep"/>
</dbReference>
<dbReference type="NCBIfam" id="TIGR01853">
    <property type="entry name" value="lipid_A_lpxD"/>
    <property type="match status" value="1"/>
</dbReference>
<dbReference type="NCBIfam" id="NF002060">
    <property type="entry name" value="PRK00892.1"/>
    <property type="match status" value="1"/>
</dbReference>
<dbReference type="PANTHER" id="PTHR43378">
    <property type="entry name" value="UDP-3-O-ACYLGLUCOSAMINE N-ACYLTRANSFERASE"/>
    <property type="match status" value="1"/>
</dbReference>
<dbReference type="PANTHER" id="PTHR43378:SF2">
    <property type="entry name" value="UDP-3-O-ACYLGLUCOSAMINE N-ACYLTRANSFERASE 1, MITOCHONDRIAL-RELATED"/>
    <property type="match status" value="1"/>
</dbReference>
<dbReference type="Pfam" id="PF00132">
    <property type="entry name" value="Hexapep"/>
    <property type="match status" value="3"/>
</dbReference>
<dbReference type="Pfam" id="PF04613">
    <property type="entry name" value="LpxD"/>
    <property type="match status" value="1"/>
</dbReference>
<dbReference type="SUPFAM" id="SSF51161">
    <property type="entry name" value="Trimeric LpxA-like enzymes"/>
    <property type="match status" value="1"/>
</dbReference>
<dbReference type="PROSITE" id="PS00101">
    <property type="entry name" value="HEXAPEP_TRANSFERASES"/>
    <property type="match status" value="2"/>
</dbReference>
<keyword id="KW-0012">Acyltransferase</keyword>
<keyword id="KW-0441">Lipid A biosynthesis</keyword>
<keyword id="KW-0444">Lipid biosynthesis</keyword>
<keyword id="KW-0443">Lipid metabolism</keyword>
<keyword id="KW-1185">Reference proteome</keyword>
<keyword id="KW-0677">Repeat</keyword>
<keyword id="KW-0808">Transferase</keyword>
<proteinExistence type="inferred from homology"/>
<sequence length="354" mass="37008">MEQNWFFPPHQGIRLGDLANQIGAELLDISAADRTVRAVAPVYRAKPGDICYMLSRKNREELQTCRAAAIICDKAISSLVPDTIPVLLTSKPHTAFALAGTLLHERAMRPSYNTSERGVAPEAFVDPTARLEAGVEVEPMAVIGAGAEIGSGTRIAAGAMIGQGVRIGRDCTISAGASILCALIGNNVIIHPGARIGQDGFGYAPGPKGGMIKIVQVGRVIIQDHVEIGANTTIDRGTMDDTVIGEGTKIDNLVQIGHNVRIGRYCGIVSQVGIAGSTQIGDGVMIGGGVGVNGHITIGDGAQIAAMSGVASDVPAGERYGGIPARPMRDFLRDVAEMALRSSERQKKKGGKDE</sequence>
<feature type="chain" id="PRO_0000059695" description="UDP-3-O-acylglucosamine N-acyltransferase">
    <location>
        <begin position="1"/>
        <end position="354"/>
    </location>
</feature>
<feature type="active site" description="Proton acceptor" evidence="1">
    <location>
        <position position="258"/>
    </location>
</feature>
<gene>
    <name evidence="1" type="primary">lpxD</name>
    <name type="ordered locus">R01503</name>
    <name type="ORF">SMc02093</name>
</gene>
<organism>
    <name type="scientific">Rhizobium meliloti (strain 1021)</name>
    <name type="common">Ensifer meliloti</name>
    <name type="synonym">Sinorhizobium meliloti</name>
    <dbReference type="NCBI Taxonomy" id="266834"/>
    <lineage>
        <taxon>Bacteria</taxon>
        <taxon>Pseudomonadati</taxon>
        <taxon>Pseudomonadota</taxon>
        <taxon>Alphaproteobacteria</taxon>
        <taxon>Hyphomicrobiales</taxon>
        <taxon>Rhizobiaceae</taxon>
        <taxon>Sinorhizobium/Ensifer group</taxon>
        <taxon>Sinorhizobium</taxon>
    </lineage>
</organism>
<protein>
    <recommendedName>
        <fullName evidence="1">UDP-3-O-acylglucosamine N-acyltransferase</fullName>
        <ecNumber evidence="1">2.3.1.191</ecNumber>
    </recommendedName>
</protein>
<name>LPXD_RHIME</name>